<comment type="function">
    <text evidence="1">Catalyzes the formation of the alpha-1,6-glucosidic linkages in glycogen by scission of a 1,4-alpha-linked oligosaccharide from growing alpha-1,4-glucan chains and the subsequent attachment of the oligosaccharide to the alpha-1,6 position.</text>
</comment>
<comment type="catalytic activity">
    <reaction>
        <text>Transfers a segment of a (1-&gt;4)-alpha-D-glucan chain to a primary hydroxy group in a similar glucan chain.</text>
        <dbReference type="EC" id="2.4.1.18"/>
    </reaction>
</comment>
<comment type="pathway">
    <text>Glycan biosynthesis; glycogen biosynthesis.</text>
</comment>
<comment type="subunit">
    <text evidence="1">Monomer.</text>
</comment>
<comment type="similarity">
    <text evidence="2">Belongs to the glycosyl hydrolase 13 family. GlgB subfamily.</text>
</comment>
<keyword id="KW-0119">Carbohydrate metabolism</keyword>
<keyword id="KW-0320">Glycogen biosynthesis</keyword>
<keyword id="KW-0321">Glycogen metabolism</keyword>
<keyword id="KW-0328">Glycosyltransferase</keyword>
<keyword id="KW-1185">Reference proteome</keyword>
<keyword id="KW-0808">Transferase</keyword>
<organism>
    <name type="scientific">Clostridium perfringens (strain 13 / Type A)</name>
    <dbReference type="NCBI Taxonomy" id="195102"/>
    <lineage>
        <taxon>Bacteria</taxon>
        <taxon>Bacillati</taxon>
        <taxon>Bacillota</taxon>
        <taxon>Clostridia</taxon>
        <taxon>Eubacteriales</taxon>
        <taxon>Clostridiaceae</taxon>
        <taxon>Clostridium</taxon>
    </lineage>
</organism>
<protein>
    <recommendedName>
        <fullName>1,4-alpha-glucan branching enzyme GlgB 1</fullName>
        <ecNumber>2.4.1.18</ecNumber>
    </recommendedName>
    <alternativeName>
        <fullName>1,4-alpha-D-glucan:1,4-alpha-D-glucan 6-glucosyl-transferase 1</fullName>
    </alternativeName>
    <alternativeName>
        <fullName>Alpha-(1-&gt;4)-glucan branching enzyme 1</fullName>
    </alternativeName>
    <alternativeName>
        <fullName>Glycogen branching enzyme 1</fullName>
        <shortName>BE 1</shortName>
    </alternativeName>
</protein>
<reference key="1">
    <citation type="journal article" date="2002" name="Proc. Natl. Acad. Sci. U.S.A.">
        <title>Complete genome sequence of Clostridium perfringens, an anaerobic flesh-eater.</title>
        <authorList>
            <person name="Shimizu T."/>
            <person name="Ohtani K."/>
            <person name="Hirakawa H."/>
            <person name="Ohshima K."/>
            <person name="Yamashita A."/>
            <person name="Shiba T."/>
            <person name="Ogasawara N."/>
            <person name="Hattori M."/>
            <person name="Kuhara S."/>
            <person name="Hayashi H."/>
        </authorList>
    </citation>
    <scope>NUCLEOTIDE SEQUENCE [LARGE SCALE GENOMIC DNA]</scope>
    <source>
        <strain>13 / Type A</strain>
    </source>
</reference>
<sequence>MTLVEVKDDKLEIKPVRLRKEKYKTQLKNKIFNEDDLYLFHEGRNYNAYNFMGAHFTSENRKRGVRFTLWAPRAKNIFLVGDFSNWETKEENKLERINETGLWSIFIPRLKEGIKYKYYIEQEDGKAVLKADPYGIYSEVRPNTASILCEKTKIRWSDKKWLNKREETNYFESPINIYELHLGSWKRKDEDEFLSYDELSIILPKYIKEMGYTHVEFMPLNEHPLDASWGYQVTGYYSITSRYGDIKGLKRLINALHKEDIGVILDWVPGHFCKDEQGLYMFDGTPTYEYEEKWKADNKGWGTFNFDLGKPEVKSFLISNAFYFINEFHIDGLRVDAVSNMLYLNYGRNHGEWVPNIYGGNENLEAIQFIKELNEAIKTYSKGVITIAEESTSWPNVTNDTEYGGLGFDFKWNMGWMNDTLEYNELDPIYRKYHHNKLTFPMMYNHSEKFILPISHDEVVHGKKSLIDKMQGDYWNKLANLRAYMAYMYGHPGKKLMFMGCEFGQFIEWREYEELEWKLIDKFDMHRKTHNFFKDLNNFYKNNSELWELDYDQDGFQWIDADNNEQSIYIFIRKSKNIEKYKIFVCNFTPMVYYDFNIGVPEKGVYREIFNTDKEEYGGSGQVIKGNLFSRKGWCHNQQYTLTIKVPPMAVSVFERIIEENKTEEKIVKEDKYI</sequence>
<feature type="chain" id="PRO_0000188695" description="1,4-alpha-glucan branching enzyme GlgB 1">
    <location>
        <begin position="1"/>
        <end position="674"/>
    </location>
</feature>
<feature type="active site" description="Nucleophile" evidence="1">
    <location>
        <position position="336"/>
    </location>
</feature>
<feature type="active site" description="Proton donor" evidence="1">
    <location>
        <position position="389"/>
    </location>
</feature>
<accession>Q8XPA2</accession>
<name>GLGB1_CLOPE</name>
<gene>
    <name type="primary">glgB1</name>
    <name type="ordered locus">CPE0063</name>
</gene>
<proteinExistence type="inferred from homology"/>
<dbReference type="EC" id="2.4.1.18"/>
<dbReference type="EMBL" id="BA000016">
    <property type="protein sequence ID" value="BAB79769.1"/>
    <property type="molecule type" value="Genomic_DNA"/>
</dbReference>
<dbReference type="RefSeq" id="WP_011009596.1">
    <property type="nucleotide sequence ID" value="NC_003366.1"/>
</dbReference>
<dbReference type="SMR" id="Q8XPA2"/>
<dbReference type="STRING" id="195102.gene:10489299"/>
<dbReference type="CAZy" id="CBM48">
    <property type="family name" value="Carbohydrate-Binding Module Family 48"/>
</dbReference>
<dbReference type="CAZy" id="GH13">
    <property type="family name" value="Glycoside Hydrolase Family 13"/>
</dbReference>
<dbReference type="KEGG" id="cpe:CPE0063"/>
<dbReference type="HOGENOM" id="CLU_004245_4_0_9"/>
<dbReference type="UniPathway" id="UPA00164"/>
<dbReference type="Proteomes" id="UP000000818">
    <property type="component" value="Chromosome"/>
</dbReference>
<dbReference type="GO" id="GO:0005829">
    <property type="term" value="C:cytosol"/>
    <property type="evidence" value="ECO:0007669"/>
    <property type="project" value="TreeGrafter"/>
</dbReference>
<dbReference type="GO" id="GO:0003844">
    <property type="term" value="F:1,4-alpha-glucan branching enzyme activity"/>
    <property type="evidence" value="ECO:0007669"/>
    <property type="project" value="UniProtKB-UniRule"/>
</dbReference>
<dbReference type="GO" id="GO:0043169">
    <property type="term" value="F:cation binding"/>
    <property type="evidence" value="ECO:0007669"/>
    <property type="project" value="InterPro"/>
</dbReference>
<dbReference type="GO" id="GO:0004553">
    <property type="term" value="F:hydrolase activity, hydrolyzing O-glycosyl compounds"/>
    <property type="evidence" value="ECO:0007669"/>
    <property type="project" value="InterPro"/>
</dbReference>
<dbReference type="GO" id="GO:0005978">
    <property type="term" value="P:glycogen biosynthetic process"/>
    <property type="evidence" value="ECO:0007669"/>
    <property type="project" value="UniProtKB-UniRule"/>
</dbReference>
<dbReference type="CDD" id="cd11322">
    <property type="entry name" value="AmyAc_Glg_BE"/>
    <property type="match status" value="1"/>
</dbReference>
<dbReference type="CDD" id="cd02855">
    <property type="entry name" value="E_set_GBE_prok_N"/>
    <property type="match status" value="1"/>
</dbReference>
<dbReference type="FunFam" id="2.60.40.1180:FF:000002">
    <property type="entry name" value="1,4-alpha-glucan branching enzyme GlgB"/>
    <property type="match status" value="1"/>
</dbReference>
<dbReference type="FunFam" id="3.20.20.80:FF:000003">
    <property type="entry name" value="1,4-alpha-glucan branching enzyme GlgB"/>
    <property type="match status" value="1"/>
</dbReference>
<dbReference type="Gene3D" id="3.20.20.80">
    <property type="entry name" value="Glycosidases"/>
    <property type="match status" value="1"/>
</dbReference>
<dbReference type="Gene3D" id="2.60.40.1180">
    <property type="entry name" value="Golgi alpha-mannosidase II"/>
    <property type="match status" value="1"/>
</dbReference>
<dbReference type="Gene3D" id="2.60.40.10">
    <property type="entry name" value="Immunoglobulins"/>
    <property type="match status" value="1"/>
</dbReference>
<dbReference type="HAMAP" id="MF_00685">
    <property type="entry name" value="GlgB"/>
    <property type="match status" value="1"/>
</dbReference>
<dbReference type="InterPro" id="IPR006048">
    <property type="entry name" value="A-amylase/branching_C"/>
</dbReference>
<dbReference type="InterPro" id="IPR037439">
    <property type="entry name" value="Branching_enzy"/>
</dbReference>
<dbReference type="InterPro" id="IPR006407">
    <property type="entry name" value="GlgB"/>
</dbReference>
<dbReference type="InterPro" id="IPR044143">
    <property type="entry name" value="GlgB_N_E_set_prok"/>
</dbReference>
<dbReference type="InterPro" id="IPR006047">
    <property type="entry name" value="Glyco_hydro_13_cat_dom"/>
</dbReference>
<dbReference type="InterPro" id="IPR004193">
    <property type="entry name" value="Glyco_hydro_13_N"/>
</dbReference>
<dbReference type="InterPro" id="IPR013780">
    <property type="entry name" value="Glyco_hydro_b"/>
</dbReference>
<dbReference type="InterPro" id="IPR017853">
    <property type="entry name" value="Glycoside_hydrolase_SF"/>
</dbReference>
<dbReference type="InterPro" id="IPR013783">
    <property type="entry name" value="Ig-like_fold"/>
</dbReference>
<dbReference type="InterPro" id="IPR014756">
    <property type="entry name" value="Ig_E-set"/>
</dbReference>
<dbReference type="NCBIfam" id="TIGR01515">
    <property type="entry name" value="branching_enzym"/>
    <property type="match status" value="1"/>
</dbReference>
<dbReference type="NCBIfam" id="NF003811">
    <property type="entry name" value="PRK05402.1"/>
    <property type="match status" value="1"/>
</dbReference>
<dbReference type="NCBIfam" id="NF008967">
    <property type="entry name" value="PRK12313.1"/>
    <property type="match status" value="1"/>
</dbReference>
<dbReference type="PANTHER" id="PTHR43651">
    <property type="entry name" value="1,4-ALPHA-GLUCAN-BRANCHING ENZYME"/>
    <property type="match status" value="1"/>
</dbReference>
<dbReference type="PANTHER" id="PTHR43651:SF3">
    <property type="entry name" value="1,4-ALPHA-GLUCAN-BRANCHING ENZYME"/>
    <property type="match status" value="1"/>
</dbReference>
<dbReference type="Pfam" id="PF00128">
    <property type="entry name" value="Alpha-amylase"/>
    <property type="match status" value="2"/>
</dbReference>
<dbReference type="Pfam" id="PF02806">
    <property type="entry name" value="Alpha-amylase_C"/>
    <property type="match status" value="1"/>
</dbReference>
<dbReference type="Pfam" id="PF02922">
    <property type="entry name" value="CBM_48"/>
    <property type="match status" value="1"/>
</dbReference>
<dbReference type="PIRSF" id="PIRSF000463">
    <property type="entry name" value="GlgB"/>
    <property type="match status" value="1"/>
</dbReference>
<dbReference type="SMART" id="SM00642">
    <property type="entry name" value="Aamy"/>
    <property type="match status" value="1"/>
</dbReference>
<dbReference type="SUPFAM" id="SSF51445">
    <property type="entry name" value="(Trans)glycosidases"/>
    <property type="match status" value="1"/>
</dbReference>
<dbReference type="SUPFAM" id="SSF81296">
    <property type="entry name" value="E set domains"/>
    <property type="match status" value="1"/>
</dbReference>
<dbReference type="SUPFAM" id="SSF51011">
    <property type="entry name" value="Glycosyl hydrolase domain"/>
    <property type="match status" value="1"/>
</dbReference>
<evidence type="ECO:0000250" key="1"/>
<evidence type="ECO:0000305" key="2"/>